<organism>
    <name type="scientific">Austrophasma gansbaaiense</name>
    <name type="common">Gladiator</name>
    <name type="synonym">Heel-walker</name>
    <dbReference type="NCBI Taxonomy" id="253136"/>
    <lineage>
        <taxon>Eukaryota</taxon>
        <taxon>Metazoa</taxon>
        <taxon>Ecdysozoa</taxon>
        <taxon>Arthropoda</taxon>
        <taxon>Hexapoda</taxon>
        <taxon>Insecta</taxon>
        <taxon>Pterygota</taxon>
        <taxon>Neoptera</taxon>
        <taxon>Polyneoptera</taxon>
        <taxon>Mantophasmatodea</taxon>
        <taxon>Austrophasmatidae</taxon>
        <taxon>Austrophasma</taxon>
    </lineage>
</organism>
<sequence length="9" mass="1091">ARTDNFVRL</sequence>
<protein>
    <recommendedName>
        <fullName evidence="4">Extended FMRFamide-8</fullName>
        <shortName evidence="4">FMRFa-8</shortName>
    </recommendedName>
</protein>
<proteinExistence type="evidence at protein level"/>
<comment type="function">
    <text evidence="1">FMRFamides and FMRFamide-like peptides are neuropeptides.</text>
</comment>
<comment type="subcellular location">
    <subcellularLocation>
        <location evidence="6">Secreted</location>
    </subcellularLocation>
</comment>
<comment type="similarity">
    <text evidence="2">Belongs to the FARP (FMRF amide related peptide) family.</text>
</comment>
<name>FAR8_AUSGA</name>
<evidence type="ECO:0000250" key="1">
    <source>
        <dbReference type="UniProtKB" id="P34405"/>
    </source>
</evidence>
<evidence type="ECO:0000255" key="2"/>
<evidence type="ECO:0000269" key="3">
    <source>
    </source>
</evidence>
<evidence type="ECO:0000303" key="4">
    <source>
    </source>
</evidence>
<evidence type="ECO:0000305" key="5"/>
<evidence type="ECO:0000305" key="6">
    <source>
    </source>
</evidence>
<reference evidence="5" key="1">
    <citation type="journal article" date="2012" name="Syst. Biol.">
        <title>Peptidomics-based phylogeny and biogeography of Mantophasmatodea (Hexapoda).</title>
        <authorList>
            <person name="Predel R."/>
            <person name="Neupert S."/>
            <person name="Huetteroth W."/>
            <person name="Kahnt J."/>
            <person name="Waidelich D."/>
            <person name="Roth S."/>
        </authorList>
    </citation>
    <scope>PROTEIN SEQUENCE</scope>
    <scope>AMIDATION AT LEU-9</scope>
    <source>
        <tissue evidence="3">Thoracic perisympathetic organs</tissue>
    </source>
</reference>
<feature type="peptide" id="PRO_0000421529" description="Extended FMRFamide-8" evidence="3">
    <location>
        <begin position="1"/>
        <end position="9"/>
    </location>
</feature>
<feature type="modified residue" description="Leucine amide" evidence="3">
    <location>
        <position position="9"/>
    </location>
</feature>
<feature type="unsure residue" description="L or I" evidence="3">
    <location>
        <position position="9"/>
    </location>
</feature>
<accession>B3A0E5</accession>
<keyword id="KW-0027">Amidation</keyword>
<keyword id="KW-0903">Direct protein sequencing</keyword>
<keyword id="KW-0527">Neuropeptide</keyword>
<keyword id="KW-0964">Secreted</keyword>
<dbReference type="GO" id="GO:0005576">
    <property type="term" value="C:extracellular region"/>
    <property type="evidence" value="ECO:0007669"/>
    <property type="project" value="UniProtKB-SubCell"/>
</dbReference>
<dbReference type="GO" id="GO:0007218">
    <property type="term" value="P:neuropeptide signaling pathway"/>
    <property type="evidence" value="ECO:0007669"/>
    <property type="project" value="UniProtKB-KW"/>
</dbReference>